<protein>
    <recommendedName>
        <fullName>Fatty-acid amide hydrolase 1</fullName>
        <ecNumber evidence="9 10 13">3.5.1.99</ecNumber>
    </recommendedName>
    <alternativeName>
        <fullName>Anandamide amidohydrolase 1</fullName>
    </alternativeName>
    <alternativeName>
        <fullName evidence="17">Fatty acid ester hydrolase</fullName>
        <ecNumber evidence="11">3.1.1.-</ecNumber>
    </alternativeName>
    <alternativeName>
        <fullName>Oleamide hydrolase 1</fullName>
    </alternativeName>
</protein>
<dbReference type="EC" id="3.5.1.99" evidence="9 10 13"/>
<dbReference type="EC" id="3.1.1.-" evidence="11"/>
<dbReference type="EMBL" id="U82535">
    <property type="protein sequence ID" value="AAB58505.1"/>
    <property type="molecule type" value="mRNA"/>
</dbReference>
<dbReference type="EMBL" id="AF098019">
    <property type="protein sequence ID" value="AAD13768.1"/>
    <property type="molecule type" value="Genomic_DNA"/>
</dbReference>
<dbReference type="EMBL" id="AF098010">
    <property type="protein sequence ID" value="AAD13768.1"/>
    <property type="status" value="JOINED"/>
    <property type="molecule type" value="Genomic_DNA"/>
</dbReference>
<dbReference type="EMBL" id="AF098011">
    <property type="protein sequence ID" value="AAD13768.1"/>
    <property type="status" value="JOINED"/>
    <property type="molecule type" value="Genomic_DNA"/>
</dbReference>
<dbReference type="EMBL" id="AF098012">
    <property type="protein sequence ID" value="AAD13768.1"/>
    <property type="status" value="JOINED"/>
    <property type="molecule type" value="Genomic_DNA"/>
</dbReference>
<dbReference type="EMBL" id="AF098013">
    <property type="protein sequence ID" value="AAD13768.1"/>
    <property type="status" value="JOINED"/>
    <property type="molecule type" value="Genomic_DNA"/>
</dbReference>
<dbReference type="EMBL" id="AF098014">
    <property type="protein sequence ID" value="AAD13768.1"/>
    <property type="status" value="JOINED"/>
    <property type="molecule type" value="Genomic_DNA"/>
</dbReference>
<dbReference type="EMBL" id="AF098015">
    <property type="protein sequence ID" value="AAD13768.1"/>
    <property type="status" value="JOINED"/>
    <property type="molecule type" value="Genomic_DNA"/>
</dbReference>
<dbReference type="EMBL" id="AF098016">
    <property type="protein sequence ID" value="AAD13768.1"/>
    <property type="status" value="JOINED"/>
    <property type="molecule type" value="Genomic_DNA"/>
</dbReference>
<dbReference type="EMBL" id="AF098017">
    <property type="protein sequence ID" value="AAD13768.1"/>
    <property type="status" value="JOINED"/>
    <property type="molecule type" value="Genomic_DNA"/>
</dbReference>
<dbReference type="EMBL" id="AF098018">
    <property type="protein sequence ID" value="AAD13768.1"/>
    <property type="status" value="JOINED"/>
    <property type="molecule type" value="Genomic_DNA"/>
</dbReference>
<dbReference type="EMBL" id="AY842444">
    <property type="protein sequence ID" value="AAV88095.1"/>
    <property type="molecule type" value="Genomic_DNA"/>
</dbReference>
<dbReference type="EMBL" id="AL122001">
    <property type="status" value="NOT_ANNOTATED_CDS"/>
    <property type="molecule type" value="Genomic_DNA"/>
</dbReference>
<dbReference type="EMBL" id="CH471059">
    <property type="protein sequence ID" value="EAX06912.1"/>
    <property type="molecule type" value="Genomic_DNA"/>
</dbReference>
<dbReference type="EMBL" id="CH471059">
    <property type="protein sequence ID" value="EAX06919.1"/>
    <property type="molecule type" value="Genomic_DNA"/>
</dbReference>
<dbReference type="EMBL" id="BC093632">
    <property type="protein sequence ID" value="AAH93632.1"/>
    <property type="molecule type" value="mRNA"/>
</dbReference>
<dbReference type="EMBL" id="BC110404">
    <property type="protein sequence ID" value="AAI10405.1"/>
    <property type="molecule type" value="mRNA"/>
</dbReference>
<dbReference type="EMBL" id="BC111941">
    <property type="protein sequence ID" value="AAI11942.1"/>
    <property type="molecule type" value="mRNA"/>
</dbReference>
<dbReference type="CCDS" id="CCDS535.1"/>
<dbReference type="RefSeq" id="NP_001432.2">
    <property type="nucleotide sequence ID" value="NM_001441.3"/>
</dbReference>
<dbReference type="SMR" id="O00519"/>
<dbReference type="BioGRID" id="108464">
    <property type="interactions" value="28"/>
</dbReference>
<dbReference type="FunCoup" id="O00519">
    <property type="interactions" value="311"/>
</dbReference>
<dbReference type="IntAct" id="O00519">
    <property type="interactions" value="11"/>
</dbReference>
<dbReference type="STRING" id="9606.ENSP00000243167"/>
<dbReference type="BindingDB" id="O00519"/>
<dbReference type="ChEMBL" id="CHEMBL2243"/>
<dbReference type="DrugBank" id="DB06894">
    <property type="generic name" value="1-Dodecanol"/>
</dbReference>
<dbReference type="DrugBank" id="DB08400">
    <property type="generic name" value="4-(3-{[5-(trifluoromethyl)pyridin-2-yl]oxy}benzyl)piperidine-1-carboxylic acid"/>
</dbReference>
<dbReference type="DrugBank" id="DB08385">
    <property type="generic name" value="4-(quinolin-3-ylmethyl)piperidine-1-carboxylic acid"/>
</dbReference>
<dbReference type="DrugBank" id="DB00316">
    <property type="generic name" value="Acetaminophen"/>
</dbReference>
<dbReference type="DrugBank" id="DB09061">
    <property type="generic name" value="Cannabidiol"/>
</dbReference>
<dbReference type="DrugBank" id="DB12010">
    <property type="generic name" value="Fostamatinib"/>
</dbReference>
<dbReference type="DrugBank" id="DB15173">
    <property type="generic name" value="JNJ-42165279"/>
</dbReference>
<dbReference type="DrugBank" id="DB14009">
    <property type="generic name" value="Medical Cannabis"/>
</dbReference>
<dbReference type="DrugBank" id="DB02465">
    <property type="generic name" value="Methoxy arachidonyl fluorophosphonate"/>
</dbReference>
<dbReference type="DrugBank" id="DB14011">
    <property type="generic name" value="Nabiximols"/>
</dbReference>
<dbReference type="DrugBank" id="DB00818">
    <property type="generic name" value="Propofol"/>
</dbReference>
<dbReference type="DrugBank" id="DB00599">
    <property type="generic name" value="Thiopental"/>
</dbReference>
<dbReference type="DrugCentral" id="O00519"/>
<dbReference type="GuidetoPHARMACOLOGY" id="1400"/>
<dbReference type="SwissLipids" id="SLP:000000145"/>
<dbReference type="GlyGen" id="O00519">
    <property type="glycosylation" value="2 sites, 1 O-linked glycan (1 site)"/>
</dbReference>
<dbReference type="iPTMnet" id="O00519"/>
<dbReference type="PhosphoSitePlus" id="O00519"/>
<dbReference type="BioMuta" id="FAAH"/>
<dbReference type="jPOST" id="O00519"/>
<dbReference type="MassIVE" id="O00519"/>
<dbReference type="PaxDb" id="9606-ENSP00000243167"/>
<dbReference type="PeptideAtlas" id="O00519"/>
<dbReference type="ProteomicsDB" id="47952"/>
<dbReference type="ABCD" id="O00519">
    <property type="antibodies" value="3 sequenced antibodies"/>
</dbReference>
<dbReference type="Antibodypedia" id="1478">
    <property type="antibodies" value="403 antibodies from 37 providers"/>
</dbReference>
<dbReference type="DNASU" id="2166"/>
<dbReference type="Ensembl" id="ENST00000243167.9">
    <property type="protein sequence ID" value="ENSP00000243167.8"/>
    <property type="gene ID" value="ENSG00000117480.16"/>
</dbReference>
<dbReference type="GeneID" id="2166"/>
<dbReference type="KEGG" id="hsa:2166"/>
<dbReference type="MANE-Select" id="ENST00000243167.9">
    <property type="protein sequence ID" value="ENSP00000243167.8"/>
    <property type="RefSeq nucleotide sequence ID" value="NM_001441.3"/>
    <property type="RefSeq protein sequence ID" value="NP_001432.2"/>
</dbReference>
<dbReference type="UCSC" id="uc001cpu.3">
    <property type="organism name" value="human"/>
</dbReference>
<dbReference type="AGR" id="HGNC:3553"/>
<dbReference type="CTD" id="2166"/>
<dbReference type="DisGeNET" id="2166"/>
<dbReference type="GeneCards" id="FAAH"/>
<dbReference type="HGNC" id="HGNC:3553">
    <property type="gene designation" value="FAAH"/>
</dbReference>
<dbReference type="HPA" id="ENSG00000117480">
    <property type="expression patterns" value="Low tissue specificity"/>
</dbReference>
<dbReference type="MalaCards" id="FAAH"/>
<dbReference type="MIM" id="602935">
    <property type="type" value="gene"/>
</dbReference>
<dbReference type="MIM" id="606581">
    <property type="type" value="phenotype"/>
</dbReference>
<dbReference type="neXtProt" id="NX_O00519"/>
<dbReference type="OpenTargets" id="ENSG00000117480"/>
<dbReference type="PharmGKB" id="PA27955"/>
<dbReference type="VEuPathDB" id="HostDB:ENSG00000117480"/>
<dbReference type="eggNOG" id="KOG1212">
    <property type="taxonomic scope" value="Eukaryota"/>
</dbReference>
<dbReference type="GeneTree" id="ENSGT00940000161237"/>
<dbReference type="HOGENOM" id="CLU_009600_9_3_1"/>
<dbReference type="InParanoid" id="O00519"/>
<dbReference type="OMA" id="GMQPWKY"/>
<dbReference type="OrthoDB" id="6428749at2759"/>
<dbReference type="PAN-GO" id="O00519">
    <property type="GO annotations" value="3 GO annotations based on evolutionary models"/>
</dbReference>
<dbReference type="PhylomeDB" id="O00519"/>
<dbReference type="TreeFam" id="TF314455"/>
<dbReference type="BioCyc" id="MetaCyc:HS04139-MONOMER"/>
<dbReference type="BRENDA" id="3.5.1.4">
    <property type="organism ID" value="2681"/>
</dbReference>
<dbReference type="BRENDA" id="3.5.1.99">
    <property type="organism ID" value="2681"/>
</dbReference>
<dbReference type="PathwayCommons" id="O00519"/>
<dbReference type="Reactome" id="R-HSA-2142753">
    <property type="pathway name" value="Arachidonate metabolism"/>
</dbReference>
<dbReference type="SignaLink" id="O00519"/>
<dbReference type="SIGNOR" id="O00519"/>
<dbReference type="BioGRID-ORCS" id="2166">
    <property type="hits" value="25 hits in 1159 CRISPR screens"/>
</dbReference>
<dbReference type="CD-CODE" id="FB4E32DD">
    <property type="entry name" value="Presynaptic clusters and postsynaptic densities"/>
</dbReference>
<dbReference type="ChiTaRS" id="FAAH">
    <property type="organism name" value="human"/>
</dbReference>
<dbReference type="GenomeRNAi" id="2166"/>
<dbReference type="Pharos" id="O00519">
    <property type="development level" value="Tchem"/>
</dbReference>
<dbReference type="PRO" id="PR:O00519"/>
<dbReference type="Proteomes" id="UP000005640">
    <property type="component" value="Chromosome 1"/>
</dbReference>
<dbReference type="RNAct" id="O00519">
    <property type="molecule type" value="protein"/>
</dbReference>
<dbReference type="Bgee" id="ENSG00000117480">
    <property type="expression patterns" value="Expressed in right lobe of thyroid gland and 156 other cell types or tissues"/>
</dbReference>
<dbReference type="ExpressionAtlas" id="O00519">
    <property type="expression patterns" value="baseline and differential"/>
</dbReference>
<dbReference type="GO" id="GO:0005856">
    <property type="term" value="C:cytoskeleton"/>
    <property type="evidence" value="ECO:0007669"/>
    <property type="project" value="UniProtKB-SubCell"/>
</dbReference>
<dbReference type="GO" id="GO:0005789">
    <property type="term" value="C:endoplasmic reticulum membrane"/>
    <property type="evidence" value="ECO:0000304"/>
    <property type="project" value="Reactome"/>
</dbReference>
<dbReference type="GO" id="GO:0098978">
    <property type="term" value="C:glutamatergic synapse"/>
    <property type="evidence" value="ECO:0007669"/>
    <property type="project" value="Ensembl"/>
</dbReference>
<dbReference type="GO" id="GO:0031090">
    <property type="term" value="C:organelle membrane"/>
    <property type="evidence" value="ECO:0000250"/>
    <property type="project" value="UniProtKB"/>
</dbReference>
<dbReference type="GO" id="GO:0098794">
    <property type="term" value="C:postsynapse"/>
    <property type="evidence" value="ECO:0007669"/>
    <property type="project" value="Ensembl"/>
</dbReference>
<dbReference type="GO" id="GO:0098793">
    <property type="term" value="C:presynapse"/>
    <property type="evidence" value="ECO:0007669"/>
    <property type="project" value="Ensembl"/>
</dbReference>
<dbReference type="GO" id="GO:0004040">
    <property type="term" value="F:amidase activity"/>
    <property type="evidence" value="ECO:0000318"/>
    <property type="project" value="GO_Central"/>
</dbReference>
<dbReference type="GO" id="GO:0017064">
    <property type="term" value="F:fatty acid amide hydrolase activity"/>
    <property type="evidence" value="ECO:0000314"/>
    <property type="project" value="UniProtKB"/>
</dbReference>
<dbReference type="GO" id="GO:0042802">
    <property type="term" value="F:identical protein binding"/>
    <property type="evidence" value="ECO:0007669"/>
    <property type="project" value="Ensembl"/>
</dbReference>
<dbReference type="GO" id="GO:0047372">
    <property type="term" value="F:monoacylglycerol lipase activity"/>
    <property type="evidence" value="ECO:0000250"/>
    <property type="project" value="UniProtKB"/>
</dbReference>
<dbReference type="GO" id="GO:0005543">
    <property type="term" value="F:phospholipid binding"/>
    <property type="evidence" value="ECO:0007669"/>
    <property type="project" value="Ensembl"/>
</dbReference>
<dbReference type="GO" id="GO:0019369">
    <property type="term" value="P:arachidonate metabolic process"/>
    <property type="evidence" value="ECO:0000304"/>
    <property type="project" value="Reactome"/>
</dbReference>
<dbReference type="GO" id="GO:0009062">
    <property type="term" value="P:fatty acid catabolic process"/>
    <property type="evidence" value="ECO:0000314"/>
    <property type="project" value="UniProtKB"/>
</dbReference>
<dbReference type="GO" id="GO:0052651">
    <property type="term" value="P:monoacylglycerol catabolic process"/>
    <property type="evidence" value="ECO:0000250"/>
    <property type="project" value="UniProtKB"/>
</dbReference>
<dbReference type="GO" id="GO:0045907">
    <property type="term" value="P:positive regulation of vasoconstriction"/>
    <property type="evidence" value="ECO:0007669"/>
    <property type="project" value="Ensembl"/>
</dbReference>
<dbReference type="GO" id="GO:0150036">
    <property type="term" value="P:regulation of trans-synaptic signaling by endocannabinoid, modulating synaptic transmission"/>
    <property type="evidence" value="ECO:0007669"/>
    <property type="project" value="Ensembl"/>
</dbReference>
<dbReference type="FunFam" id="3.90.1300.10:FF:000001">
    <property type="entry name" value="Fatty-acid amide hydrolase 1"/>
    <property type="match status" value="1"/>
</dbReference>
<dbReference type="Gene3D" id="3.90.1300.10">
    <property type="entry name" value="Amidase signature (AS) domain"/>
    <property type="match status" value="1"/>
</dbReference>
<dbReference type="InterPro" id="IPR020556">
    <property type="entry name" value="Amidase_CS"/>
</dbReference>
<dbReference type="InterPro" id="IPR023631">
    <property type="entry name" value="Amidase_dom"/>
</dbReference>
<dbReference type="InterPro" id="IPR036928">
    <property type="entry name" value="AS_sf"/>
</dbReference>
<dbReference type="InterPro" id="IPR052096">
    <property type="entry name" value="Endocannabinoid_amidase"/>
</dbReference>
<dbReference type="PANTHER" id="PTHR45847">
    <property type="entry name" value="FATTY ACID AMIDE HYDROLASE"/>
    <property type="match status" value="1"/>
</dbReference>
<dbReference type="PANTHER" id="PTHR45847:SF3">
    <property type="entry name" value="FATTY-ACID AMIDE HYDROLASE 1"/>
    <property type="match status" value="1"/>
</dbReference>
<dbReference type="Pfam" id="PF01425">
    <property type="entry name" value="Amidase"/>
    <property type="match status" value="1"/>
</dbReference>
<dbReference type="PIRSF" id="PIRSF001221">
    <property type="entry name" value="Amidase_fungi"/>
    <property type="match status" value="1"/>
</dbReference>
<dbReference type="SUPFAM" id="SSF75304">
    <property type="entry name" value="Amidase signature (AS) enzymes"/>
    <property type="match status" value="1"/>
</dbReference>
<dbReference type="PROSITE" id="PS00571">
    <property type="entry name" value="AMIDASES"/>
    <property type="match status" value="1"/>
</dbReference>
<accession>O00519</accession>
<accession>D3DQ19</accession>
<accession>Q52M86</accession>
<accession>Q5TDF8</accession>
<sequence length="579" mass="63066">MVQYELWAALPGASGVALACCFVAAAVALRWSGRRTARGAVVRARQRQRAGLENMDRAAQRFRLQNPDLDSEALLALPLPQLVQKLHSRELAPEAVLFTYVGKAWEVNKGTNCVTSYLADCETQLSQAPRQGLLYGVPVSLKECFTYKGQDSTLGLSLNEGVPAECDSVVVHVLKLQGAVPFVHTNVPQSMFSYDCSNPLFGQTVNPWKSSKSPGGSSGGEGALIGSGGSPLGLGTDIGGSIRFPSSFCGICGLKPTGNRLSKSGLKGCVYGQEAVRLSVGPMARDVESLALCLRALLCEDMFRLDPTVPPLPFREEVYTSSQPLRVGYYETDNYTMPSPAMRRAVLETKQSLEAAGHTLVPFLPSNIPHALETLSTGGLFSDGGHTFLQNFKGDFVDPCLGDLVSILKLPQWLKGLLAFLVKPLLPRLSAFLSNMKSRSAGKLWELQHEIEVYRKTVIAQWRALDLDVVLTPMLAPALDLNAPGRATGAVSYTMLYNCLDFPAGVVPVTTVTAEDEAQMEHYRGYFGDIWDKMLQKGMKKSVGLPVAVQCVALPWQEELCLRFMREVERLMTPEKQSS</sequence>
<reference key="1">
    <citation type="journal article" date="1997" name="Proc. Natl. Acad. Sci. U.S.A.">
        <title>Molecular characterization of human and mouse fatty acid amide hydrolases.</title>
        <authorList>
            <person name="Giang D.K."/>
            <person name="Cravatt B.F."/>
        </authorList>
    </citation>
    <scope>NUCLEOTIDE SEQUENCE [MRNA]</scope>
    <scope>FUNCTION</scope>
    <scope>CATALYTIC ACTIVITY</scope>
    <scope>ACTIVITY REGULATION</scope>
    <source>
        <tissue>Liver</tissue>
    </source>
</reference>
<reference key="2">
    <citation type="journal article" date="1998" name="Genomics">
        <title>Conserved chromosomal location and genomic structure of human and mouse fatty-acid amide hydrolase genes and evaluation of clasper as a candidate neurological mutation.</title>
        <authorList>
            <person name="Wan M."/>
            <person name="Cravatt B.F."/>
            <person name="Ring H.Z."/>
            <person name="Zhang X."/>
            <person name="Francke U."/>
        </authorList>
    </citation>
    <scope>NUCLEOTIDE SEQUENCE [GENOMIC DNA]</scope>
</reference>
<reference key="3">
    <citation type="submission" date="2004-12" db="EMBL/GenBank/DDBJ databases">
        <authorList>
            <consortium name="NIEHS SNPs program"/>
        </authorList>
    </citation>
    <scope>NUCLEOTIDE SEQUENCE [GENOMIC DNA]</scope>
    <scope>VARIANT THR-129</scope>
</reference>
<reference key="4">
    <citation type="journal article" date="2006" name="Nature">
        <title>The DNA sequence and biological annotation of human chromosome 1.</title>
        <authorList>
            <person name="Gregory S.G."/>
            <person name="Barlow K.F."/>
            <person name="McLay K.E."/>
            <person name="Kaul R."/>
            <person name="Swarbreck D."/>
            <person name="Dunham A."/>
            <person name="Scott C.E."/>
            <person name="Howe K.L."/>
            <person name="Woodfine K."/>
            <person name="Spencer C.C.A."/>
            <person name="Jones M.C."/>
            <person name="Gillson C."/>
            <person name="Searle S."/>
            <person name="Zhou Y."/>
            <person name="Kokocinski F."/>
            <person name="McDonald L."/>
            <person name="Evans R."/>
            <person name="Phillips K."/>
            <person name="Atkinson A."/>
            <person name="Cooper R."/>
            <person name="Jones C."/>
            <person name="Hall R.E."/>
            <person name="Andrews T.D."/>
            <person name="Lloyd C."/>
            <person name="Ainscough R."/>
            <person name="Almeida J.P."/>
            <person name="Ambrose K.D."/>
            <person name="Anderson F."/>
            <person name="Andrew R.W."/>
            <person name="Ashwell R.I.S."/>
            <person name="Aubin K."/>
            <person name="Babbage A.K."/>
            <person name="Bagguley C.L."/>
            <person name="Bailey J."/>
            <person name="Beasley H."/>
            <person name="Bethel G."/>
            <person name="Bird C.P."/>
            <person name="Bray-Allen S."/>
            <person name="Brown J.Y."/>
            <person name="Brown A.J."/>
            <person name="Buckley D."/>
            <person name="Burton J."/>
            <person name="Bye J."/>
            <person name="Carder C."/>
            <person name="Chapman J.C."/>
            <person name="Clark S.Y."/>
            <person name="Clarke G."/>
            <person name="Clee C."/>
            <person name="Cobley V."/>
            <person name="Collier R.E."/>
            <person name="Corby N."/>
            <person name="Coville G.J."/>
            <person name="Davies J."/>
            <person name="Deadman R."/>
            <person name="Dunn M."/>
            <person name="Earthrowl M."/>
            <person name="Ellington A.G."/>
            <person name="Errington H."/>
            <person name="Frankish A."/>
            <person name="Frankland J."/>
            <person name="French L."/>
            <person name="Garner P."/>
            <person name="Garnett J."/>
            <person name="Gay L."/>
            <person name="Ghori M.R.J."/>
            <person name="Gibson R."/>
            <person name="Gilby L.M."/>
            <person name="Gillett W."/>
            <person name="Glithero R.J."/>
            <person name="Grafham D.V."/>
            <person name="Griffiths C."/>
            <person name="Griffiths-Jones S."/>
            <person name="Grocock R."/>
            <person name="Hammond S."/>
            <person name="Harrison E.S.I."/>
            <person name="Hart E."/>
            <person name="Haugen E."/>
            <person name="Heath P.D."/>
            <person name="Holmes S."/>
            <person name="Holt K."/>
            <person name="Howden P.J."/>
            <person name="Hunt A.R."/>
            <person name="Hunt S.E."/>
            <person name="Hunter G."/>
            <person name="Isherwood J."/>
            <person name="James R."/>
            <person name="Johnson C."/>
            <person name="Johnson D."/>
            <person name="Joy A."/>
            <person name="Kay M."/>
            <person name="Kershaw J.K."/>
            <person name="Kibukawa M."/>
            <person name="Kimberley A.M."/>
            <person name="King A."/>
            <person name="Knights A.J."/>
            <person name="Lad H."/>
            <person name="Laird G."/>
            <person name="Lawlor S."/>
            <person name="Leongamornlert D.A."/>
            <person name="Lloyd D.M."/>
            <person name="Loveland J."/>
            <person name="Lovell J."/>
            <person name="Lush M.J."/>
            <person name="Lyne R."/>
            <person name="Martin S."/>
            <person name="Mashreghi-Mohammadi M."/>
            <person name="Matthews L."/>
            <person name="Matthews N.S.W."/>
            <person name="McLaren S."/>
            <person name="Milne S."/>
            <person name="Mistry S."/>
            <person name="Moore M.J.F."/>
            <person name="Nickerson T."/>
            <person name="O'Dell C.N."/>
            <person name="Oliver K."/>
            <person name="Palmeiri A."/>
            <person name="Palmer S.A."/>
            <person name="Parker A."/>
            <person name="Patel D."/>
            <person name="Pearce A.V."/>
            <person name="Peck A.I."/>
            <person name="Pelan S."/>
            <person name="Phelps K."/>
            <person name="Phillimore B.J."/>
            <person name="Plumb R."/>
            <person name="Rajan J."/>
            <person name="Raymond C."/>
            <person name="Rouse G."/>
            <person name="Saenphimmachak C."/>
            <person name="Sehra H.K."/>
            <person name="Sheridan E."/>
            <person name="Shownkeen R."/>
            <person name="Sims S."/>
            <person name="Skuce C.D."/>
            <person name="Smith M."/>
            <person name="Steward C."/>
            <person name="Subramanian S."/>
            <person name="Sycamore N."/>
            <person name="Tracey A."/>
            <person name="Tromans A."/>
            <person name="Van Helmond Z."/>
            <person name="Wall M."/>
            <person name="Wallis J.M."/>
            <person name="White S."/>
            <person name="Whitehead S.L."/>
            <person name="Wilkinson J.E."/>
            <person name="Willey D.L."/>
            <person name="Williams H."/>
            <person name="Wilming L."/>
            <person name="Wray P.W."/>
            <person name="Wu Z."/>
            <person name="Coulson A."/>
            <person name="Vaudin M."/>
            <person name="Sulston J.E."/>
            <person name="Durbin R.M."/>
            <person name="Hubbard T."/>
            <person name="Wooster R."/>
            <person name="Dunham I."/>
            <person name="Carter N.P."/>
            <person name="McVean G."/>
            <person name="Ross M.T."/>
            <person name="Harrow J."/>
            <person name="Olson M.V."/>
            <person name="Beck S."/>
            <person name="Rogers J."/>
            <person name="Bentley D.R."/>
        </authorList>
    </citation>
    <scope>NUCLEOTIDE SEQUENCE [LARGE SCALE GENOMIC DNA]</scope>
</reference>
<reference key="5">
    <citation type="submission" date="2005-09" db="EMBL/GenBank/DDBJ databases">
        <authorList>
            <person name="Mural R.J."/>
            <person name="Istrail S."/>
            <person name="Sutton G.G."/>
            <person name="Florea L."/>
            <person name="Halpern A.L."/>
            <person name="Mobarry C.M."/>
            <person name="Lippert R."/>
            <person name="Walenz B."/>
            <person name="Shatkay H."/>
            <person name="Dew I."/>
            <person name="Miller J.R."/>
            <person name="Flanigan M.J."/>
            <person name="Edwards N.J."/>
            <person name="Bolanos R."/>
            <person name="Fasulo D."/>
            <person name="Halldorsson B.V."/>
            <person name="Hannenhalli S."/>
            <person name="Turner R."/>
            <person name="Yooseph S."/>
            <person name="Lu F."/>
            <person name="Nusskern D.R."/>
            <person name="Shue B.C."/>
            <person name="Zheng X.H."/>
            <person name="Zhong F."/>
            <person name="Delcher A.L."/>
            <person name="Huson D.H."/>
            <person name="Kravitz S.A."/>
            <person name="Mouchard L."/>
            <person name="Reinert K."/>
            <person name="Remington K.A."/>
            <person name="Clark A.G."/>
            <person name="Waterman M.S."/>
            <person name="Eichler E.E."/>
            <person name="Adams M.D."/>
            <person name="Hunkapiller M.W."/>
            <person name="Myers E.W."/>
            <person name="Venter J.C."/>
        </authorList>
    </citation>
    <scope>NUCLEOTIDE SEQUENCE [LARGE SCALE GENOMIC DNA]</scope>
    <scope>VARIANT THR-129</scope>
</reference>
<reference key="6">
    <citation type="journal article" date="2004" name="Genome Res.">
        <title>The status, quality, and expansion of the NIH full-length cDNA project: the Mammalian Gene Collection (MGC).</title>
        <authorList>
            <consortium name="The MGC Project Team"/>
        </authorList>
    </citation>
    <scope>NUCLEOTIDE SEQUENCE [LARGE SCALE MRNA]</scope>
    <source>
        <tissue>Brain</tissue>
    </source>
</reference>
<reference key="7">
    <citation type="journal article" date="2003" name="Nat. Biotechnol.">
        <title>Exploring proteomes and analyzing protein processing by mass spectrometric identification of sorted N-terminal peptides.</title>
        <authorList>
            <person name="Gevaert K."/>
            <person name="Goethals M."/>
            <person name="Martens L."/>
            <person name="Van Damme J."/>
            <person name="Staes A."/>
            <person name="Thomas G.R."/>
            <person name="Vandekerckhove J."/>
        </authorList>
    </citation>
    <scope>PROTEIN SEQUENCE OF 456-463</scope>
    <source>
        <tissue>Platelet</tissue>
    </source>
</reference>
<reference key="8">
    <citation type="journal article" date="2006" name="J. Biol. Chem.">
        <title>A second fatty acid amide hydrolase with variable distribution among placental mammals.</title>
        <authorList>
            <person name="Wei B.Q."/>
            <person name="Mikkelsen T.S."/>
            <person name="McKinney M.K."/>
            <person name="Lander E.S."/>
            <person name="Cravatt B.F."/>
        </authorList>
    </citation>
    <scope>FUNCTION</scope>
    <scope>SUBCELLULAR LOCATION</scope>
    <scope>TOPOLOGY</scope>
    <scope>ACTIVITY REGULATION</scope>
    <scope>TISSUE SPECIFICITY</scope>
    <scope>CATALYTIC ACTIVITY</scope>
    <scope>BIOPHYSICOCHEMICAL PROPERTIES</scope>
</reference>
<reference key="9">
    <citation type="journal article" date="2010" name="Chem. Res. Toxicol.">
        <title>Inactivation of lipid glyceryl ester metabolism in human THP1 monocytes/macrophages by activated organophosphorus insecticides: role of carboxylesterases 1 and 2.</title>
        <authorList>
            <person name="Xie S."/>
            <person name="Borazjani A."/>
            <person name="Hatfield M.J."/>
            <person name="Edwards C.C."/>
            <person name="Potter P.M."/>
            <person name="Ross M.K."/>
        </authorList>
    </citation>
    <scope>FUNCTION</scope>
    <scope>CATALYTIC ACTIVITY</scope>
</reference>
<reference key="10">
    <citation type="journal article" date="2010" name="J. Biol. Chem.">
        <title>Lipid droplets are novel sites of N-acylethanolamine inactivation by fatty acid amide hydrolase-2.</title>
        <authorList>
            <person name="Kaczocha M."/>
            <person name="Glaser S.T."/>
            <person name="Chae J."/>
            <person name="Brown D.A."/>
            <person name="Deutsch D.G."/>
        </authorList>
    </citation>
    <scope>FUNCTION</scope>
    <scope>CATALYTIC ACTIVITY</scope>
</reference>
<reference key="11">
    <citation type="journal article" date="2014" name="J. Proteomics">
        <title>An enzyme assisted RP-RPLC approach for in-depth analysis of human liver phosphoproteome.</title>
        <authorList>
            <person name="Bian Y."/>
            <person name="Song C."/>
            <person name="Cheng K."/>
            <person name="Dong M."/>
            <person name="Wang F."/>
            <person name="Huang J."/>
            <person name="Sun D."/>
            <person name="Wang L."/>
            <person name="Ye M."/>
            <person name="Zou H."/>
        </authorList>
    </citation>
    <scope>PHOSPHORYLATION [LARGE SCALE ANALYSIS] AT SER-241</scope>
    <scope>IDENTIFICATION BY MASS SPECTROMETRY [LARGE SCALE ANALYSIS]</scope>
    <source>
        <tissue>Liver</tissue>
    </source>
</reference>
<reference key="12">
    <citation type="journal article" date="2002" name="Proc. Natl. Acad. Sci. U.S.A.">
        <title>A missense mutation in human fatty acid amide hydrolase associated with problem drug use.</title>
        <authorList>
            <person name="Sipe J.C."/>
            <person name="Chiang K."/>
            <person name="Gerber A.L."/>
            <person name="Beutler E."/>
            <person name="Cravatt B.F."/>
        </authorList>
    </citation>
    <scope>POLYMORPHISM</scope>
    <scope>ASSOCIATION OF VARIANT THR-129 WITH SUSCEPTIBILITY TO POLYSUBSTANCE ABUSE</scope>
    <scope>CHARACTERIZATION OF VARIANT THR-129</scope>
</reference>
<reference key="13">
    <citation type="journal article" date="2004" name="Hum. Mol. Genet.">
        <title>Reduced cellular expression and activity of the P129T mutant of human fatty acid amide hydrolase: evidence for a link between defects in the endocannabinoid system and problem drug use.</title>
        <authorList>
            <person name="Chiang K.P."/>
            <person name="Gerber A.L."/>
            <person name="Sipe J.C."/>
            <person name="Cravatt B.F."/>
        </authorList>
    </citation>
    <scope>CHARACTERIZATION OF VARIANT THR-129</scope>
</reference>
<reference key="14">
    <citation type="journal article" date="2006" name="Hum. Genet.">
        <title>The fatty acid amide hydrolase 385 A/A (P129T) variant: haplotype analysis of an ancient missense mutation and validation of risk for drug addiction.</title>
        <authorList>
            <person name="Flanagan J.M."/>
            <person name="Gerber A.L."/>
            <person name="Cadet J.L."/>
            <person name="Beutler E."/>
            <person name="Sipe J.C."/>
        </authorList>
    </citation>
    <scope>ASSOCIATION OF VARIANT THR-129 WITH SUSCEPTIBILITY TO POLYSUBSTANCE ABUSE</scope>
</reference>
<reference key="15">
    <citation type="journal article" date="2006" name="Science">
        <title>The consensus coding sequences of human breast and colorectal cancers.</title>
        <authorList>
            <person name="Sjoeblom T."/>
            <person name="Jones S."/>
            <person name="Wood L.D."/>
            <person name="Parsons D.W."/>
            <person name="Lin J."/>
            <person name="Barber T.D."/>
            <person name="Mandelker D."/>
            <person name="Leary R.J."/>
            <person name="Ptak J."/>
            <person name="Silliman N."/>
            <person name="Szabo S."/>
            <person name="Buckhaults P."/>
            <person name="Farrell C."/>
            <person name="Meeh P."/>
            <person name="Markowitz S.D."/>
            <person name="Willis J."/>
            <person name="Dawson D."/>
            <person name="Willson J.K.V."/>
            <person name="Gazdar A.F."/>
            <person name="Hartigan J."/>
            <person name="Wu L."/>
            <person name="Liu C."/>
            <person name="Parmigiani G."/>
            <person name="Park B.H."/>
            <person name="Bachman K.E."/>
            <person name="Papadopoulos N."/>
            <person name="Vogelstein B."/>
            <person name="Kinzler K.W."/>
            <person name="Velculescu V.E."/>
        </authorList>
    </citation>
    <scope>VARIANT [LARGE SCALE ANALYSIS] ASP-345</scope>
</reference>
<reference key="16">
    <citation type="journal article" date="2013" name="Pharmacogenomics">
        <title>Association of a functional FAAH polymorphism with methamphetamine-induced symptoms and dependence in a Malaysian population.</title>
        <authorList>
            <person name="Sim M.S."/>
            <person name="Hatim A."/>
            <person name="Reynolds G.P."/>
            <person name="Mohamed Z."/>
        </authorList>
    </citation>
    <scope>ASSOCIATION OF VARIANT THR-129 WITH SUSCEPTIBILITY TO METHAMPHETAMINE DEPENDENCE</scope>
</reference>
<feature type="chain" id="PRO_0000105264" description="Fatty-acid amide hydrolase 1">
    <location>
        <begin position="1"/>
        <end position="579"/>
    </location>
</feature>
<feature type="transmembrane region" description="Helical" evidence="4">
    <location>
        <begin position="9"/>
        <end position="29"/>
    </location>
</feature>
<feature type="topological domain" description="Cytoplasmic" evidence="1">
    <location>
        <begin position="30"/>
        <end position="403"/>
    </location>
</feature>
<feature type="intramembrane region" evidence="1">
    <location>
        <begin position="404"/>
        <end position="433"/>
    </location>
</feature>
<feature type="topological domain" description="Cytoplasmic" evidence="1">
    <location>
        <begin position="434"/>
        <end position="579"/>
    </location>
</feature>
<feature type="active site" description="Charge relay system" evidence="1">
    <location>
        <position position="142"/>
    </location>
</feature>
<feature type="active site" description="Charge relay system" evidence="1">
    <location>
        <position position="217"/>
    </location>
</feature>
<feature type="active site" description="Acyl-ester intermediate" evidence="1">
    <location>
        <position position="241"/>
    </location>
</feature>
<feature type="binding site" evidence="1">
    <location>
        <position position="191"/>
    </location>
    <ligand>
        <name>substrate</name>
    </ligand>
</feature>
<feature type="binding site" evidence="1">
    <location>
        <position position="217"/>
    </location>
    <ligand>
        <name>substrate</name>
    </ligand>
</feature>
<feature type="binding site" evidence="1">
    <location>
        <begin position="238"/>
        <end position="241"/>
    </location>
    <ligand>
        <name>substrate</name>
    </ligand>
</feature>
<feature type="modified residue" description="Phosphoserine" evidence="18">
    <location>
        <position position="241"/>
    </location>
</feature>
<feature type="sequence variant" id="VAR_013563" description="Risk factor for drug abuse; the mutant enzyme is more sensitive to proteolytic degradation; displays reduced cellular expression probably due to a post-translational mechanism preceding productive folding; dbSNP:rs324420." evidence="5 6 8 12 14 15">
    <original>P</original>
    <variation>T</variation>
    <location>
        <position position="129"/>
    </location>
</feature>
<feature type="sequence variant" id="VAR_035704" description="In a breast cancer sample; somatic mutation; dbSNP:rs772931153." evidence="7">
    <original>A</original>
    <variation>D</variation>
    <location>
        <position position="345"/>
    </location>
</feature>
<feature type="sequence conflict" description="In Ref. 1; AAB58505 and 2; AAD13768." evidence="16" ref="1 2">
    <original>R</original>
    <variation>K</variation>
    <location>
        <position position="47"/>
    </location>
</feature>
<gene>
    <name type="primary">FAAH</name>
    <name type="synonym">FAAH1</name>
</gene>
<evidence type="ECO:0000250" key="1"/>
<evidence type="ECO:0000250" key="2">
    <source>
        <dbReference type="UniProtKB" id="O08914"/>
    </source>
</evidence>
<evidence type="ECO:0000250" key="3">
    <source>
        <dbReference type="UniProtKB" id="P97612"/>
    </source>
</evidence>
<evidence type="ECO:0000255" key="4"/>
<evidence type="ECO:0000269" key="5">
    <source>
    </source>
</evidence>
<evidence type="ECO:0000269" key="6">
    <source>
    </source>
</evidence>
<evidence type="ECO:0000269" key="7">
    <source>
    </source>
</evidence>
<evidence type="ECO:0000269" key="8">
    <source>
    </source>
</evidence>
<evidence type="ECO:0000269" key="9">
    <source>
    </source>
</evidence>
<evidence type="ECO:0000269" key="10">
    <source>
    </source>
</evidence>
<evidence type="ECO:0000269" key="11">
    <source>
    </source>
</evidence>
<evidence type="ECO:0000269" key="12">
    <source>
    </source>
</evidence>
<evidence type="ECO:0000269" key="13">
    <source>
    </source>
</evidence>
<evidence type="ECO:0000269" key="14">
    <source ref="3"/>
</evidence>
<evidence type="ECO:0000269" key="15">
    <source ref="5"/>
</evidence>
<evidence type="ECO:0000305" key="16"/>
<evidence type="ECO:0000305" key="17">
    <source>
    </source>
</evidence>
<evidence type="ECO:0007744" key="18">
    <source>
    </source>
</evidence>
<name>FAAH1_HUMAN</name>
<keyword id="KW-0963">Cytoplasm</keyword>
<keyword id="KW-0206">Cytoskeleton</keyword>
<keyword id="KW-0903">Direct protein sequencing</keyword>
<keyword id="KW-0378">Hydrolase</keyword>
<keyword id="KW-0442">Lipid degradation</keyword>
<keyword id="KW-0443">Lipid metabolism</keyword>
<keyword id="KW-0472">Membrane</keyword>
<keyword id="KW-0597">Phosphoprotein</keyword>
<keyword id="KW-1267">Proteomics identification</keyword>
<keyword id="KW-1185">Reference proteome</keyword>
<keyword id="KW-0812">Transmembrane</keyword>
<keyword id="KW-1133">Transmembrane helix</keyword>
<proteinExistence type="evidence at protein level"/>
<organism>
    <name type="scientific">Homo sapiens</name>
    <name type="common">Human</name>
    <dbReference type="NCBI Taxonomy" id="9606"/>
    <lineage>
        <taxon>Eukaryota</taxon>
        <taxon>Metazoa</taxon>
        <taxon>Chordata</taxon>
        <taxon>Craniata</taxon>
        <taxon>Vertebrata</taxon>
        <taxon>Euteleostomi</taxon>
        <taxon>Mammalia</taxon>
        <taxon>Eutheria</taxon>
        <taxon>Euarchontoglires</taxon>
        <taxon>Primates</taxon>
        <taxon>Haplorrhini</taxon>
        <taxon>Catarrhini</taxon>
        <taxon>Hominidae</taxon>
        <taxon>Homo</taxon>
    </lineage>
</organism>
<comment type="function">
    <text evidence="2 9 10 11 13">Catalyzes the hydrolysis of endogenous amidated lipids like the sleep-inducing lipid oleamide ((9Z)-octadecenamide), the endocannabinoid anandamide (N-(5Z,8Z,11Z,14Z-eicosatetraenoyl)-ethanolamine), as well as other fatty amides, to their corresponding fatty acids, thereby regulating the signaling functions of these molecules (PubMed:17015445, PubMed:19926788, PubMed:9122178). Hydrolyzes polyunsaturated substrate anandamide preferentially as compared to monounsaturated substrates (PubMed:17015445, PubMed:9122178). It can also catalyze the hydrolysis of the endocannabinoid 2-arachidonoylglycerol (2-(5Z,8Z,11Z,14Z-eicosatetraenoyl)-glycerol) (PubMed:21049984). FAAH cooperates with PM20D1 in the hydrolysis of amino acid-conjugated fatty acids such as N-fatty acyl glycine and N-fatty acyl-L-serine, thereby acting as a physiological regulator of specific subsets of intracellular, but not of extracellular, N-fatty acyl amino acids (By similarity).</text>
</comment>
<comment type="catalytic activity">
    <reaction evidence="9 10 13">
        <text>N-(5Z,8Z,11Z,14Z-eicosatetraenoyl)-ethanolamine + H2O = ethanolamine + (5Z,8Z,11Z,14Z)-eicosatetraenoate</text>
        <dbReference type="Rhea" id="RHEA:26136"/>
        <dbReference type="ChEBI" id="CHEBI:2700"/>
        <dbReference type="ChEBI" id="CHEBI:15377"/>
        <dbReference type="ChEBI" id="CHEBI:32395"/>
        <dbReference type="ChEBI" id="CHEBI:57603"/>
        <dbReference type="EC" id="3.5.1.99"/>
    </reaction>
    <physiologicalReaction direction="left-to-right" evidence="9 10 13">
        <dbReference type="Rhea" id="RHEA:26137"/>
    </physiologicalReaction>
</comment>
<comment type="catalytic activity">
    <reaction evidence="9 13">
        <text>(9Z)-octadecenamide + H2O = (9Z)-octadecenoate + NH4(+)</text>
        <dbReference type="Rhea" id="RHEA:26506"/>
        <dbReference type="ChEBI" id="CHEBI:15377"/>
        <dbReference type="ChEBI" id="CHEBI:28938"/>
        <dbReference type="ChEBI" id="CHEBI:30823"/>
        <dbReference type="ChEBI" id="CHEBI:116314"/>
        <dbReference type="EC" id="3.5.1.99"/>
    </reaction>
    <physiologicalReaction direction="left-to-right" evidence="9 13">
        <dbReference type="Rhea" id="RHEA:26507"/>
    </physiologicalReaction>
</comment>
<comment type="catalytic activity">
    <reaction evidence="11">
        <text>2-(5Z,8Z,11Z,14Z-eicosatetraenoyl)-glycerol + H2O = glycerol + (5Z,8Z,11Z,14Z)-eicosatetraenoate + H(+)</text>
        <dbReference type="Rhea" id="RHEA:26132"/>
        <dbReference type="ChEBI" id="CHEBI:15377"/>
        <dbReference type="ChEBI" id="CHEBI:15378"/>
        <dbReference type="ChEBI" id="CHEBI:17754"/>
        <dbReference type="ChEBI" id="CHEBI:32395"/>
        <dbReference type="ChEBI" id="CHEBI:52392"/>
    </reaction>
    <physiologicalReaction direction="left-to-right" evidence="11">
        <dbReference type="Rhea" id="RHEA:26133"/>
    </physiologicalReaction>
</comment>
<comment type="catalytic activity">
    <reaction evidence="9">
        <text>N-(9Z-octadecenoyl) ethanolamine + H2O = ethanolamine + (9Z)-octadecenoate</text>
        <dbReference type="Rhea" id="RHEA:45060"/>
        <dbReference type="ChEBI" id="CHEBI:15377"/>
        <dbReference type="ChEBI" id="CHEBI:30823"/>
        <dbReference type="ChEBI" id="CHEBI:57603"/>
        <dbReference type="ChEBI" id="CHEBI:71466"/>
    </reaction>
    <physiologicalReaction direction="left-to-right" evidence="9">
        <dbReference type="Rhea" id="RHEA:45061"/>
    </physiologicalReaction>
</comment>
<comment type="catalytic activity">
    <reaction evidence="9 10">
        <text>N-hexadecanoylethanolamine + H2O = ethanolamine + hexadecanoate</text>
        <dbReference type="Rhea" id="RHEA:45064"/>
        <dbReference type="ChEBI" id="CHEBI:7896"/>
        <dbReference type="ChEBI" id="CHEBI:15377"/>
        <dbReference type="ChEBI" id="CHEBI:57603"/>
        <dbReference type="ChEBI" id="CHEBI:71464"/>
    </reaction>
    <physiologicalReaction direction="left-to-right" evidence="9 10">
        <dbReference type="Rhea" id="RHEA:45065"/>
    </physiologicalReaction>
</comment>
<comment type="catalytic activity">
    <reaction evidence="13">
        <text>hexadecanamide + H2O = hexadecanoate + NH4(+)</text>
        <dbReference type="Rhea" id="RHEA:62984"/>
        <dbReference type="ChEBI" id="CHEBI:7896"/>
        <dbReference type="ChEBI" id="CHEBI:15377"/>
        <dbReference type="ChEBI" id="CHEBI:28938"/>
        <dbReference type="ChEBI" id="CHEBI:74475"/>
    </reaction>
    <physiologicalReaction direction="left-to-right" evidence="13">
        <dbReference type="Rhea" id="RHEA:62985"/>
    </physiologicalReaction>
</comment>
<comment type="catalytic activity">
    <reaction evidence="13">
        <text>tetradecamide + H2O = tetradecanoate + NH4(+)</text>
        <dbReference type="Rhea" id="RHEA:62992"/>
        <dbReference type="ChEBI" id="CHEBI:15377"/>
        <dbReference type="ChEBI" id="CHEBI:28938"/>
        <dbReference type="ChEBI" id="CHEBI:30807"/>
        <dbReference type="ChEBI" id="CHEBI:137125"/>
    </reaction>
    <physiologicalReaction direction="left-to-right" evidence="13">
        <dbReference type="Rhea" id="RHEA:62993"/>
    </physiologicalReaction>
</comment>
<comment type="catalytic activity">
    <reaction evidence="9">
        <text>N-(9Z-octadecenoyl)-taurine + H2O = taurine + (9Z)-octadecenoate</text>
        <dbReference type="Rhea" id="RHEA:63148"/>
        <dbReference type="ChEBI" id="CHEBI:15377"/>
        <dbReference type="ChEBI" id="CHEBI:30823"/>
        <dbReference type="ChEBI" id="CHEBI:146191"/>
        <dbReference type="ChEBI" id="CHEBI:507393"/>
    </reaction>
    <physiologicalReaction direction="left-to-right" evidence="9">
        <dbReference type="Rhea" id="RHEA:63149"/>
    </physiologicalReaction>
</comment>
<comment type="catalytic activity">
    <reaction evidence="3">
        <text>(9Z,12Z,15Z)-octadecatrienamide + H2O = (9Z,12Z,15Z)-octadecatrienoate + NH4(+)</text>
        <dbReference type="Rhea" id="RHEA:62976"/>
        <dbReference type="ChEBI" id="CHEBI:15377"/>
        <dbReference type="ChEBI" id="CHEBI:28938"/>
        <dbReference type="ChEBI" id="CHEBI:32387"/>
        <dbReference type="ChEBI" id="CHEBI:142684"/>
    </reaction>
    <physiologicalReaction direction="left-to-right" evidence="3">
        <dbReference type="Rhea" id="RHEA:62977"/>
    </physiologicalReaction>
</comment>
<comment type="catalytic activity">
    <reaction evidence="3">
        <text>(5Z,8Z,11Z,14Z)-eicosatetraenamide + H2O = (5Z,8Z,11Z,14Z)-eicosatetraenoate + NH4(+)</text>
        <dbReference type="Rhea" id="RHEA:63016"/>
        <dbReference type="ChEBI" id="CHEBI:15377"/>
        <dbReference type="ChEBI" id="CHEBI:28938"/>
        <dbReference type="ChEBI" id="CHEBI:32395"/>
        <dbReference type="ChEBI" id="CHEBI:137830"/>
    </reaction>
    <physiologicalReaction direction="left-to-right" evidence="3">
        <dbReference type="Rhea" id="RHEA:63017"/>
    </physiologicalReaction>
</comment>
<comment type="catalytic activity">
    <reaction evidence="3">
        <text>(6Z)-octadecenamide + H2O = (6Z)-octadecenoate + NH4(+)</text>
        <dbReference type="Rhea" id="RHEA:63008"/>
        <dbReference type="ChEBI" id="CHEBI:15377"/>
        <dbReference type="ChEBI" id="CHEBI:28938"/>
        <dbReference type="ChEBI" id="CHEBI:32375"/>
        <dbReference type="ChEBI" id="CHEBI:146168"/>
    </reaction>
    <physiologicalReaction direction="left-to-right" evidence="3">
        <dbReference type="Rhea" id="RHEA:63009"/>
    </physiologicalReaction>
</comment>
<comment type="catalytic activity">
    <reaction evidence="3">
        <text>(15Z)-tetracosenamide + H2O = (15Z)-tetracosenoate + NH4(+)</text>
        <dbReference type="Rhea" id="RHEA:63028"/>
        <dbReference type="ChEBI" id="CHEBI:15377"/>
        <dbReference type="ChEBI" id="CHEBI:28938"/>
        <dbReference type="ChEBI" id="CHEBI:32392"/>
        <dbReference type="ChEBI" id="CHEBI:146166"/>
    </reaction>
    <physiologicalReaction direction="left-to-right" evidence="3">
        <dbReference type="Rhea" id="RHEA:63029"/>
    </physiologicalReaction>
</comment>
<comment type="catalytic activity">
    <reaction evidence="3">
        <text>(8Z,11Z,14Z)-eicosatrienamide + H2O = (8Z,11Z,14Z)-eicosatrienoate + NH4(+)</text>
        <dbReference type="Rhea" id="RHEA:62996"/>
        <dbReference type="ChEBI" id="CHEBI:15377"/>
        <dbReference type="ChEBI" id="CHEBI:28938"/>
        <dbReference type="ChEBI" id="CHEBI:71589"/>
        <dbReference type="ChEBI" id="CHEBI:146163"/>
    </reaction>
    <physiologicalReaction direction="left-to-right" evidence="3">
        <dbReference type="Rhea" id="RHEA:62997"/>
    </physiologicalReaction>
</comment>
<comment type="catalytic activity">
    <reaction evidence="3">
        <text>(11Z,14Z,17Z)-eicosatrienamide + H2O = (11Z,14Z,17Z)-eicosatrienoate + NH4(+)</text>
        <dbReference type="Rhea" id="RHEA:63000"/>
        <dbReference type="ChEBI" id="CHEBI:15377"/>
        <dbReference type="ChEBI" id="CHEBI:28938"/>
        <dbReference type="ChEBI" id="CHEBI:77223"/>
        <dbReference type="ChEBI" id="CHEBI:146164"/>
    </reaction>
    <physiologicalReaction direction="left-to-right" evidence="3">
        <dbReference type="Rhea" id="RHEA:63001"/>
    </physiologicalReaction>
</comment>
<comment type="catalytic activity">
    <reaction evidence="3">
        <text>(11Z,14Z)-eicosadienamide + H2O = (11Z,14Z)-eicosadienoate + NH4(+)</text>
        <dbReference type="Rhea" id="RHEA:63004"/>
        <dbReference type="ChEBI" id="CHEBI:15377"/>
        <dbReference type="ChEBI" id="CHEBI:28938"/>
        <dbReference type="ChEBI" id="CHEBI:77220"/>
        <dbReference type="ChEBI" id="CHEBI:146165"/>
    </reaction>
    <physiologicalReaction direction="left-to-right" evidence="3">
        <dbReference type="Rhea" id="RHEA:63005"/>
    </physiologicalReaction>
</comment>
<comment type="catalytic activity">
    <reaction evidence="3">
        <text>(9Z,12Z)-octadecadienamide + H2O = (9Z,12Z)-octadecadienoate + NH4(+)</text>
        <dbReference type="Rhea" id="RHEA:63020"/>
        <dbReference type="ChEBI" id="CHEBI:15377"/>
        <dbReference type="ChEBI" id="CHEBI:28938"/>
        <dbReference type="ChEBI" id="CHEBI:30245"/>
        <dbReference type="ChEBI" id="CHEBI:82984"/>
    </reaction>
    <physiologicalReaction direction="left-to-right" evidence="3">
        <dbReference type="Rhea" id="RHEA:63021"/>
    </physiologicalReaction>
</comment>
<comment type="catalytic activity">
    <reaction evidence="3">
        <text>1-O-methyl-(5Z,8Z,11Z,14Z)-eicosatetraenoate + H2O = methanol + (5Z,8Z,11Z,14Z)-eicosatetraenoate + H(+)</text>
        <dbReference type="Rhea" id="RHEA:63052"/>
        <dbReference type="ChEBI" id="CHEBI:15377"/>
        <dbReference type="ChEBI" id="CHEBI:15378"/>
        <dbReference type="ChEBI" id="CHEBI:17790"/>
        <dbReference type="ChEBI" id="CHEBI:32395"/>
        <dbReference type="ChEBI" id="CHEBI:78033"/>
    </reaction>
    <physiologicalReaction direction="left-to-right" evidence="3">
        <dbReference type="Rhea" id="RHEA:63053"/>
    </physiologicalReaction>
</comment>
<comment type="catalytic activity">
    <reaction evidence="3">
        <text>(11Z)-eicosenamide + H2O = (11Z)-eicosenoate + NH4(+)</text>
        <dbReference type="Rhea" id="RHEA:63120"/>
        <dbReference type="ChEBI" id="CHEBI:15377"/>
        <dbReference type="ChEBI" id="CHEBI:28938"/>
        <dbReference type="ChEBI" id="CHEBI:32426"/>
        <dbReference type="ChEBI" id="CHEBI:146167"/>
    </reaction>
    <physiologicalReaction direction="left-to-right" evidence="3">
        <dbReference type="Rhea" id="RHEA:63121"/>
    </physiologicalReaction>
</comment>
<comment type="catalytic activity">
    <reaction evidence="2">
        <text>N-(9Z-hexadecenoyl) ethanolamine + H2O = (9Z)-hexadecenoate + ethanolamine</text>
        <dbReference type="Rhea" id="RHEA:35563"/>
        <dbReference type="ChEBI" id="CHEBI:15377"/>
        <dbReference type="ChEBI" id="CHEBI:32372"/>
        <dbReference type="ChEBI" id="CHEBI:57603"/>
        <dbReference type="ChEBI" id="CHEBI:71465"/>
    </reaction>
    <physiologicalReaction direction="left-to-right" evidence="2">
        <dbReference type="Rhea" id="RHEA:35564"/>
    </physiologicalReaction>
</comment>
<comment type="catalytic activity">
    <reaction evidence="2">
        <text>N-octadecanoyl ethanolamine + H2O = octadecanoate + ethanolamine</text>
        <dbReference type="Rhea" id="RHEA:63124"/>
        <dbReference type="ChEBI" id="CHEBI:15377"/>
        <dbReference type="ChEBI" id="CHEBI:25629"/>
        <dbReference type="ChEBI" id="CHEBI:57603"/>
        <dbReference type="ChEBI" id="CHEBI:85299"/>
    </reaction>
    <physiologicalReaction direction="left-to-right" evidence="2">
        <dbReference type="Rhea" id="RHEA:63125"/>
    </physiologicalReaction>
</comment>
<comment type="catalytic activity">
    <reaction evidence="2">
        <text>N-docosanoyl-ethanolamine + H2O = docosanoate + ethanolamine</text>
        <dbReference type="Rhea" id="RHEA:63128"/>
        <dbReference type="ChEBI" id="CHEBI:15377"/>
        <dbReference type="ChEBI" id="CHEBI:23858"/>
        <dbReference type="ChEBI" id="CHEBI:57603"/>
        <dbReference type="ChEBI" id="CHEBI:146186"/>
    </reaction>
    <physiologicalReaction direction="left-to-right" evidence="2">
        <dbReference type="Rhea" id="RHEA:63129"/>
    </physiologicalReaction>
</comment>
<comment type="catalytic activity">
    <reaction evidence="2">
        <text>N-tetracosanoyl-taurine + H2O = tetracosanoate + taurine</text>
        <dbReference type="Rhea" id="RHEA:63140"/>
        <dbReference type="ChEBI" id="CHEBI:15377"/>
        <dbReference type="ChEBI" id="CHEBI:31014"/>
        <dbReference type="ChEBI" id="CHEBI:132049"/>
        <dbReference type="ChEBI" id="CHEBI:507393"/>
    </reaction>
    <physiologicalReaction direction="left-to-right" evidence="2">
        <dbReference type="Rhea" id="RHEA:63141"/>
    </physiologicalReaction>
</comment>
<comment type="catalytic activity">
    <reaction evidence="2">
        <text>N-(15Z-tetracosenoyl)-ethanolamine + H2O = (15Z)-tetracosenoate + ethanolamine</text>
        <dbReference type="Rhea" id="RHEA:63144"/>
        <dbReference type="ChEBI" id="CHEBI:15377"/>
        <dbReference type="ChEBI" id="CHEBI:32392"/>
        <dbReference type="ChEBI" id="CHEBI:57603"/>
        <dbReference type="ChEBI" id="CHEBI:146187"/>
    </reaction>
    <physiologicalReaction direction="left-to-right" evidence="2">
        <dbReference type="Rhea" id="RHEA:63145"/>
    </physiologicalReaction>
</comment>
<comment type="catalytic activity">
    <reaction evidence="2">
        <text>N-docosanoyl-taurine + H2O = docosanoate + taurine</text>
        <dbReference type="Rhea" id="RHEA:63156"/>
        <dbReference type="ChEBI" id="CHEBI:15377"/>
        <dbReference type="ChEBI" id="CHEBI:23858"/>
        <dbReference type="ChEBI" id="CHEBI:146196"/>
        <dbReference type="ChEBI" id="CHEBI:507393"/>
    </reaction>
    <physiologicalReaction direction="left-to-right" evidence="2">
        <dbReference type="Rhea" id="RHEA:63157"/>
    </physiologicalReaction>
</comment>
<comment type="catalytic activity">
    <reaction evidence="2">
        <text>N-(15Z-tetracosenoyl)-taurine + H2O = (15Z)-tetracosenoate + taurine</text>
        <dbReference type="Rhea" id="RHEA:63160"/>
        <dbReference type="ChEBI" id="CHEBI:15377"/>
        <dbReference type="ChEBI" id="CHEBI:32392"/>
        <dbReference type="ChEBI" id="CHEBI:146198"/>
        <dbReference type="ChEBI" id="CHEBI:507393"/>
    </reaction>
    <physiologicalReaction direction="left-to-right" evidence="2">
        <dbReference type="Rhea" id="RHEA:63161"/>
    </physiologicalReaction>
</comment>
<comment type="catalytic activity">
    <reaction evidence="2">
        <text>N-tricosanoyl-taurine + H2O = tricosanoate + taurine</text>
        <dbReference type="Rhea" id="RHEA:63164"/>
        <dbReference type="ChEBI" id="CHEBI:15377"/>
        <dbReference type="ChEBI" id="CHEBI:79007"/>
        <dbReference type="ChEBI" id="CHEBI:146197"/>
        <dbReference type="ChEBI" id="CHEBI:507393"/>
    </reaction>
    <physiologicalReaction direction="left-to-right" evidence="2">
        <dbReference type="Rhea" id="RHEA:63165"/>
    </physiologicalReaction>
</comment>
<comment type="catalytic activity">
    <reaction evidence="2">
        <text>(9Z)-octadecenoate + glycine = N-(9Z-octadecenoyl)glycine + H2O</text>
        <dbReference type="Rhea" id="RHEA:51316"/>
        <dbReference type="ChEBI" id="CHEBI:15377"/>
        <dbReference type="ChEBI" id="CHEBI:30823"/>
        <dbReference type="ChEBI" id="CHEBI:57305"/>
        <dbReference type="ChEBI" id="CHEBI:133992"/>
    </reaction>
    <physiologicalReaction direction="right-to-left" evidence="2">
        <dbReference type="Rhea" id="RHEA:51318"/>
    </physiologicalReaction>
</comment>
<comment type="catalytic activity">
    <reaction evidence="2">
        <text>N-(5Z,8Z,11Z,14Z)-eicosatetraenoyl-glycine + H2O = (5Z,8Z,11Z,14Z)-eicosatetraenoate + glycine</text>
        <dbReference type="Rhea" id="RHEA:64108"/>
        <dbReference type="ChEBI" id="CHEBI:15377"/>
        <dbReference type="ChEBI" id="CHEBI:32395"/>
        <dbReference type="ChEBI" id="CHEBI:57305"/>
        <dbReference type="ChEBI" id="CHEBI:59002"/>
    </reaction>
    <physiologicalReaction direction="left-to-right" evidence="2">
        <dbReference type="Rhea" id="RHEA:64109"/>
    </physiologicalReaction>
</comment>
<comment type="catalytic activity">
    <reaction evidence="2">
        <text>N-(5Z,8Z,11Z,14Z-eicosatetraenoyl)-L-serine + H2O = (5Z,8Z,11Z,14Z)-eicosatetraenoate + L-serine</text>
        <dbReference type="Rhea" id="RHEA:64116"/>
        <dbReference type="ChEBI" id="CHEBI:15377"/>
        <dbReference type="ChEBI" id="CHEBI:32395"/>
        <dbReference type="ChEBI" id="CHEBI:33384"/>
        <dbReference type="ChEBI" id="CHEBI:149697"/>
    </reaction>
    <physiologicalReaction direction="left-to-right" evidence="2">
        <dbReference type="Rhea" id="RHEA:64117"/>
    </physiologicalReaction>
</comment>
<comment type="activity regulation">
    <text evidence="9 13">Inhibited by O-aryl carbamates and alpha-keto heterocycles (PubMed:17015445). Inhibited by trifluoromethyl ketone (PubMed:9122178).</text>
</comment>
<comment type="biophysicochemical properties">
    <kinetics>
        <Vmax evidence="9">9.7 nmol/min/mg enzyme for the hydrolysis of oleamide ((9Z)-octadecenamide)</Vmax>
        <Vmax evidence="9">2.1 nmol/min/mg enzyme for the hydrolysis of N-palmitoyl ethanolamine (N-hexadecanoyl ethanolamine)</Vmax>
        <Vmax evidence="9">5.6 nmol/min/mg enzyme for the hydrolysis of N-oleoyl ethanolamine (N-(9Z-octadecenoyl)-ethanolamine)</Vmax>
        <Vmax evidence="9">17.0 nmol/min/mg enzyme for the hydrolysis of anandamide (N-(5Z,8Z,11Z,14Z-eicosatetraenoyl)-ethanolamine)</Vmax>
        <Vmax evidence="9">0.75 nmol/min/mg enzyme for the hydrolysis of N-oleoyltaurine (N-(9Z-octadecenoyl)-taurine)</Vmax>
    </kinetics>
    <phDependence>
        <text evidence="9">Optimum pH is around 9.0.</text>
    </phDependence>
</comment>
<comment type="subunit">
    <text evidence="3">Homodimer.</text>
</comment>
<comment type="interaction">
    <interactant intactId="EBI-1389829">
        <id>O00519</id>
    </interactant>
    <interactant intactId="EBI-945833">
        <id>Q7Z3S9</id>
        <label>NOTCH2NLA</label>
    </interactant>
    <organismsDiffer>false</organismsDiffer>
    <experiments>3</experiments>
</comment>
<comment type="subcellular location">
    <subcellularLocation>
        <location evidence="9">Endomembrane system</location>
        <topology evidence="9">Single-pass membrane protein</topology>
    </subcellularLocation>
    <subcellularLocation>
        <location evidence="9">Cytoplasm</location>
        <location evidence="9">Cytoskeleton</location>
    </subcellularLocation>
    <text>Seems to be attached to intracellular membranes and a portion of the cytoskeletal network.</text>
</comment>
<comment type="tissue specificity">
    <text evidence="9">Highly expressed in the brain, small intestine, pancreas, skeletal muscle and testis. Also expressed in the kidney, liver, lung, placenta and prostate.</text>
</comment>
<comment type="polymorphism">
    <text evidence="5 8 12">Genetic variations in FAAH can be associated with susceptibility to polysubstance abuse [MIM:606581]. At homozygosity, variant Thr-129 is strongly associated with drug and alcohol abuse, and methamphetamine dependence.</text>
</comment>
<comment type="similarity">
    <text evidence="16">Belongs to the amidase family.</text>
</comment>